<keyword id="KW-0687">Ribonucleoprotein</keyword>
<keyword id="KW-0689">Ribosomal protein</keyword>
<reference key="1">
    <citation type="journal article" date="2007" name="PLoS ONE">
        <title>Analysis of the neurotoxin complex genes in Clostridium botulinum A1-A4 and B1 strains: BoNT/A3, /Ba4 and /B1 clusters are located within plasmids.</title>
        <authorList>
            <person name="Smith T.J."/>
            <person name="Hill K.K."/>
            <person name="Foley B.T."/>
            <person name="Detter J.C."/>
            <person name="Munk A.C."/>
            <person name="Bruce D.C."/>
            <person name="Doggett N.A."/>
            <person name="Smith L.A."/>
            <person name="Marks J.D."/>
            <person name="Xie G."/>
            <person name="Brettin T.S."/>
        </authorList>
    </citation>
    <scope>NUCLEOTIDE SEQUENCE [LARGE SCALE GENOMIC DNA]</scope>
    <source>
        <strain>Okra / Type B1</strain>
    </source>
</reference>
<protein>
    <recommendedName>
        <fullName evidence="1">Large ribosomal subunit protein bL36</fullName>
    </recommendedName>
    <alternativeName>
        <fullName evidence="2">50S ribosomal protein L36</fullName>
    </alternativeName>
</protein>
<accession>B1IGC9</accession>
<name>RL36_CLOBK</name>
<evidence type="ECO:0000255" key="1">
    <source>
        <dbReference type="HAMAP-Rule" id="MF_00251"/>
    </source>
</evidence>
<evidence type="ECO:0000305" key="2"/>
<proteinExistence type="inferred from homology"/>
<gene>
    <name evidence="1" type="primary">rpmJ</name>
    <name type="ordered locus">CLD_1049</name>
</gene>
<sequence>MKVRPSVKPICEKCKVIRRKGKVMVICENPKHKQKQG</sequence>
<feature type="chain" id="PRO_1000101020" description="Large ribosomal subunit protein bL36">
    <location>
        <begin position="1"/>
        <end position="37"/>
    </location>
</feature>
<comment type="similarity">
    <text evidence="1">Belongs to the bacterial ribosomal protein bL36 family.</text>
</comment>
<organism>
    <name type="scientific">Clostridium botulinum (strain Okra / Type B1)</name>
    <dbReference type="NCBI Taxonomy" id="498213"/>
    <lineage>
        <taxon>Bacteria</taxon>
        <taxon>Bacillati</taxon>
        <taxon>Bacillota</taxon>
        <taxon>Clostridia</taxon>
        <taxon>Eubacteriales</taxon>
        <taxon>Clostridiaceae</taxon>
        <taxon>Clostridium</taxon>
    </lineage>
</organism>
<dbReference type="EMBL" id="CP000939">
    <property type="protein sequence ID" value="ACA46848.1"/>
    <property type="molecule type" value="Genomic_DNA"/>
</dbReference>
<dbReference type="RefSeq" id="WP_003156543.1">
    <property type="nucleotide sequence ID" value="NC_010516.1"/>
</dbReference>
<dbReference type="SMR" id="B1IGC9"/>
<dbReference type="GeneID" id="97412846"/>
<dbReference type="KEGG" id="cbb:CLD_1049"/>
<dbReference type="HOGENOM" id="CLU_135723_6_2_9"/>
<dbReference type="Proteomes" id="UP000008541">
    <property type="component" value="Chromosome"/>
</dbReference>
<dbReference type="GO" id="GO:0005737">
    <property type="term" value="C:cytoplasm"/>
    <property type="evidence" value="ECO:0007669"/>
    <property type="project" value="UniProtKB-ARBA"/>
</dbReference>
<dbReference type="GO" id="GO:1990904">
    <property type="term" value="C:ribonucleoprotein complex"/>
    <property type="evidence" value="ECO:0007669"/>
    <property type="project" value="UniProtKB-KW"/>
</dbReference>
<dbReference type="GO" id="GO:0005840">
    <property type="term" value="C:ribosome"/>
    <property type="evidence" value="ECO:0007669"/>
    <property type="project" value="UniProtKB-KW"/>
</dbReference>
<dbReference type="GO" id="GO:0003735">
    <property type="term" value="F:structural constituent of ribosome"/>
    <property type="evidence" value="ECO:0007669"/>
    <property type="project" value="InterPro"/>
</dbReference>
<dbReference type="GO" id="GO:0006412">
    <property type="term" value="P:translation"/>
    <property type="evidence" value="ECO:0007669"/>
    <property type="project" value="UniProtKB-UniRule"/>
</dbReference>
<dbReference type="HAMAP" id="MF_00251">
    <property type="entry name" value="Ribosomal_bL36"/>
    <property type="match status" value="1"/>
</dbReference>
<dbReference type="InterPro" id="IPR000473">
    <property type="entry name" value="Ribosomal_bL36"/>
</dbReference>
<dbReference type="InterPro" id="IPR035977">
    <property type="entry name" value="Ribosomal_bL36_sp"/>
</dbReference>
<dbReference type="NCBIfam" id="TIGR01022">
    <property type="entry name" value="rpmJ_bact"/>
    <property type="match status" value="1"/>
</dbReference>
<dbReference type="PANTHER" id="PTHR42888">
    <property type="entry name" value="50S RIBOSOMAL PROTEIN L36, CHLOROPLASTIC"/>
    <property type="match status" value="1"/>
</dbReference>
<dbReference type="PANTHER" id="PTHR42888:SF1">
    <property type="entry name" value="LARGE RIBOSOMAL SUBUNIT PROTEIN BL36C"/>
    <property type="match status" value="1"/>
</dbReference>
<dbReference type="Pfam" id="PF00444">
    <property type="entry name" value="Ribosomal_L36"/>
    <property type="match status" value="1"/>
</dbReference>
<dbReference type="SUPFAM" id="SSF57840">
    <property type="entry name" value="Ribosomal protein L36"/>
    <property type="match status" value="1"/>
</dbReference>
<dbReference type="PROSITE" id="PS00828">
    <property type="entry name" value="RIBOSOMAL_L36"/>
    <property type="match status" value="1"/>
</dbReference>